<sequence>VHWTAEEKQLITGLWGKVNVADCGAEALARLLIVYPWTQRFFASFGNLSSPTAILGNPMVRAHGKKVLTSFGDAVKNLDNIKNTFAQLSELHCDKLHVDPENFRLLGDILIIVLAAHFPKEFTPECQAAWQKLVRVVAHALARKYH</sequence>
<keyword id="KW-0903">Direct protein sequencing</keyword>
<keyword id="KW-0349">Heme</keyword>
<keyword id="KW-0408">Iron</keyword>
<keyword id="KW-0479">Metal-binding</keyword>
<keyword id="KW-0561">Oxygen transport</keyword>
<keyword id="KW-1185">Reference proteome</keyword>
<keyword id="KW-0813">Transport</keyword>
<proteinExistence type="evidence at protein level"/>
<dbReference type="SMR" id="P02115"/>
<dbReference type="STRING" id="8840.ENSAPLP00000022240"/>
<dbReference type="Proteomes" id="UP000016666">
    <property type="component" value="Unassembled WGS sequence"/>
</dbReference>
<dbReference type="GO" id="GO:0072562">
    <property type="term" value="C:blood microparticle"/>
    <property type="evidence" value="ECO:0007669"/>
    <property type="project" value="TreeGrafter"/>
</dbReference>
<dbReference type="GO" id="GO:0031838">
    <property type="term" value="C:haptoglobin-hemoglobin complex"/>
    <property type="evidence" value="ECO:0007669"/>
    <property type="project" value="TreeGrafter"/>
</dbReference>
<dbReference type="GO" id="GO:0005833">
    <property type="term" value="C:hemoglobin complex"/>
    <property type="evidence" value="ECO:0007669"/>
    <property type="project" value="InterPro"/>
</dbReference>
<dbReference type="GO" id="GO:0031720">
    <property type="term" value="F:haptoglobin binding"/>
    <property type="evidence" value="ECO:0007669"/>
    <property type="project" value="TreeGrafter"/>
</dbReference>
<dbReference type="GO" id="GO:0020037">
    <property type="term" value="F:heme binding"/>
    <property type="evidence" value="ECO:0007669"/>
    <property type="project" value="InterPro"/>
</dbReference>
<dbReference type="GO" id="GO:0046872">
    <property type="term" value="F:metal ion binding"/>
    <property type="evidence" value="ECO:0007669"/>
    <property type="project" value="UniProtKB-KW"/>
</dbReference>
<dbReference type="GO" id="GO:0043177">
    <property type="term" value="F:organic acid binding"/>
    <property type="evidence" value="ECO:0007669"/>
    <property type="project" value="TreeGrafter"/>
</dbReference>
<dbReference type="GO" id="GO:0019825">
    <property type="term" value="F:oxygen binding"/>
    <property type="evidence" value="ECO:0007669"/>
    <property type="project" value="InterPro"/>
</dbReference>
<dbReference type="GO" id="GO:0005344">
    <property type="term" value="F:oxygen carrier activity"/>
    <property type="evidence" value="ECO:0007669"/>
    <property type="project" value="UniProtKB-KW"/>
</dbReference>
<dbReference type="GO" id="GO:0004601">
    <property type="term" value="F:peroxidase activity"/>
    <property type="evidence" value="ECO:0007669"/>
    <property type="project" value="TreeGrafter"/>
</dbReference>
<dbReference type="GO" id="GO:0042744">
    <property type="term" value="P:hydrogen peroxide catabolic process"/>
    <property type="evidence" value="ECO:0007669"/>
    <property type="project" value="TreeGrafter"/>
</dbReference>
<dbReference type="CDD" id="cd08925">
    <property type="entry name" value="Hb-beta-like"/>
    <property type="match status" value="1"/>
</dbReference>
<dbReference type="FunFam" id="1.10.490.10:FF:000001">
    <property type="entry name" value="Hemoglobin subunit beta"/>
    <property type="match status" value="1"/>
</dbReference>
<dbReference type="Gene3D" id="1.10.490.10">
    <property type="entry name" value="Globins"/>
    <property type="match status" value="1"/>
</dbReference>
<dbReference type="InterPro" id="IPR000971">
    <property type="entry name" value="Globin"/>
</dbReference>
<dbReference type="InterPro" id="IPR009050">
    <property type="entry name" value="Globin-like_sf"/>
</dbReference>
<dbReference type="InterPro" id="IPR012292">
    <property type="entry name" value="Globin/Proto"/>
</dbReference>
<dbReference type="InterPro" id="IPR002337">
    <property type="entry name" value="Hemoglobin_b"/>
</dbReference>
<dbReference type="InterPro" id="IPR050056">
    <property type="entry name" value="Hemoglobin_oxygen_transport"/>
</dbReference>
<dbReference type="PANTHER" id="PTHR11442">
    <property type="entry name" value="HEMOGLOBIN FAMILY MEMBER"/>
    <property type="match status" value="1"/>
</dbReference>
<dbReference type="PANTHER" id="PTHR11442:SF7">
    <property type="entry name" value="HEMOGLOBIN SUBUNIT EPSILON"/>
    <property type="match status" value="1"/>
</dbReference>
<dbReference type="Pfam" id="PF00042">
    <property type="entry name" value="Globin"/>
    <property type="match status" value="1"/>
</dbReference>
<dbReference type="PRINTS" id="PR00814">
    <property type="entry name" value="BETAHAEM"/>
</dbReference>
<dbReference type="SUPFAM" id="SSF46458">
    <property type="entry name" value="Globin-like"/>
    <property type="match status" value="1"/>
</dbReference>
<dbReference type="PROSITE" id="PS01033">
    <property type="entry name" value="GLOBIN"/>
    <property type="match status" value="1"/>
</dbReference>
<protein>
    <recommendedName>
        <fullName>Hemoglobin subunit beta</fullName>
    </recommendedName>
    <alternativeName>
        <fullName>Beta-globin</fullName>
    </alternativeName>
    <alternativeName>
        <fullName>Hemoglobin beta chain</fullName>
    </alternativeName>
</protein>
<evidence type="ECO:0000255" key="1">
    <source>
        <dbReference type="PROSITE-ProRule" id="PRU00238"/>
    </source>
</evidence>
<name>HBB_ANAPP</name>
<reference key="1">
    <citation type="journal article" date="1983" name="Hoppe-Seyler's Z. Physiol. Chem.">
        <title>The amino-acid sequence of Northern Mallard (Anas platyrhynchos platyrhynchos) hemoglobin.</title>
        <authorList>
            <person name="Godovac-Zimmermann J."/>
            <person name="Braunitzer G."/>
        </authorList>
    </citation>
    <scope>PROTEIN SEQUENCE</scope>
</reference>
<organism>
    <name type="scientific">Anas platyrhynchos platyrhynchos</name>
    <name type="common">Northern mallard</name>
    <dbReference type="NCBI Taxonomy" id="8840"/>
    <lineage>
        <taxon>Eukaryota</taxon>
        <taxon>Metazoa</taxon>
        <taxon>Chordata</taxon>
        <taxon>Craniata</taxon>
        <taxon>Vertebrata</taxon>
        <taxon>Euteleostomi</taxon>
        <taxon>Archelosauria</taxon>
        <taxon>Archosauria</taxon>
        <taxon>Dinosauria</taxon>
        <taxon>Saurischia</taxon>
        <taxon>Theropoda</taxon>
        <taxon>Coelurosauria</taxon>
        <taxon>Aves</taxon>
        <taxon>Neognathae</taxon>
        <taxon>Galloanserae</taxon>
        <taxon>Anseriformes</taxon>
        <taxon>Anatidae</taxon>
        <taxon>Anatinae</taxon>
        <taxon>Anas</taxon>
    </lineage>
</organism>
<comment type="function">
    <text>Involved in oxygen transport from the lung to the various peripheral tissues.</text>
</comment>
<comment type="subunit">
    <text>Heterotetramer of two alpha chains and two beta chains.</text>
</comment>
<comment type="tissue specificity">
    <text>Red blood cells.</text>
</comment>
<comment type="similarity">
    <text evidence="1">Belongs to the globin family.</text>
</comment>
<gene>
    <name type="primary">HBB</name>
</gene>
<accession>P02115</accession>
<feature type="chain" id="PRO_0000052869" description="Hemoglobin subunit beta">
    <location>
        <begin position="1"/>
        <end position="146"/>
    </location>
</feature>
<feature type="domain" description="Globin" evidence="1">
    <location>
        <begin position="2"/>
        <end position="146"/>
    </location>
</feature>
<feature type="binding site" description="distal binding residue">
    <location>
        <position position="63"/>
    </location>
    <ligand>
        <name>heme b</name>
        <dbReference type="ChEBI" id="CHEBI:60344"/>
    </ligand>
    <ligandPart>
        <name>Fe</name>
        <dbReference type="ChEBI" id="CHEBI:18248"/>
    </ligandPart>
</feature>
<feature type="binding site" description="proximal binding residue">
    <location>
        <position position="92"/>
    </location>
    <ligand>
        <name>heme b</name>
        <dbReference type="ChEBI" id="CHEBI:60344"/>
    </ligand>
    <ligandPart>
        <name>Fe</name>
        <dbReference type="ChEBI" id="CHEBI:18248"/>
    </ligandPart>
</feature>